<gene>
    <name type="primary">Hoxa4</name>
    <name type="synonym">Hox-a4</name>
</gene>
<accession>P09635</accession>
<feature type="chain" id="PRO_0000200050" description="Homeobox protein Hox-A4">
    <location>
        <begin position="1" status="less than"/>
        <end position="67" status="greater than"/>
    </location>
</feature>
<feature type="DNA-binding region" description="Homeobox" evidence="1">
    <location>
        <begin position="1" status="less than"/>
        <end position="42"/>
    </location>
</feature>
<feature type="non-terminal residue">
    <location>
        <position position="1"/>
    </location>
</feature>
<feature type="non-terminal residue">
    <location>
        <position position="67"/>
    </location>
</feature>
<dbReference type="EMBL" id="M16808">
    <property type="status" value="NOT_ANNOTATED_CDS"/>
    <property type="molecule type" value="Genomic_DNA"/>
</dbReference>
<dbReference type="EMBL" id="S76296">
    <property type="status" value="NOT_ANNOTATED_CDS"/>
    <property type="molecule type" value="Genomic_DNA"/>
</dbReference>
<dbReference type="PIR" id="B27471">
    <property type="entry name" value="B27471"/>
</dbReference>
<dbReference type="SMR" id="P09635"/>
<dbReference type="FunCoup" id="P09635">
    <property type="interactions" value="139"/>
</dbReference>
<dbReference type="PaxDb" id="10116-ENSRNOP00000035732"/>
<dbReference type="AGR" id="RGD:2814"/>
<dbReference type="RGD" id="2814">
    <property type="gene designation" value="Hoxa4"/>
</dbReference>
<dbReference type="eggNOG" id="KOG0489">
    <property type="taxonomic scope" value="Eukaryota"/>
</dbReference>
<dbReference type="InParanoid" id="P09635"/>
<dbReference type="Proteomes" id="UP000002494">
    <property type="component" value="Unplaced"/>
</dbReference>
<dbReference type="GO" id="GO:0005634">
    <property type="term" value="C:nucleus"/>
    <property type="evidence" value="ECO:0007669"/>
    <property type="project" value="UniProtKB-SubCell"/>
</dbReference>
<dbReference type="GO" id="GO:0000981">
    <property type="term" value="F:DNA-binding transcription factor activity, RNA polymerase II-specific"/>
    <property type="evidence" value="ECO:0007669"/>
    <property type="project" value="InterPro"/>
</dbReference>
<dbReference type="GO" id="GO:1990837">
    <property type="term" value="F:sequence-specific double-stranded DNA binding"/>
    <property type="evidence" value="ECO:0000266"/>
    <property type="project" value="RGD"/>
</dbReference>
<dbReference type="GO" id="GO:0009952">
    <property type="term" value="P:anterior/posterior pattern specification"/>
    <property type="evidence" value="ECO:0000266"/>
    <property type="project" value="RGD"/>
</dbReference>
<dbReference type="GO" id="GO:0048704">
    <property type="term" value="P:embryonic skeletal system morphogenesis"/>
    <property type="evidence" value="ECO:0000266"/>
    <property type="project" value="RGD"/>
</dbReference>
<dbReference type="CDD" id="cd00086">
    <property type="entry name" value="homeodomain"/>
    <property type="match status" value="1"/>
</dbReference>
<dbReference type="Gene3D" id="1.10.10.60">
    <property type="entry name" value="Homeodomain-like"/>
    <property type="match status" value="1"/>
</dbReference>
<dbReference type="InterPro" id="IPR050609">
    <property type="entry name" value="Antp_homeobox_Deformed_sf"/>
</dbReference>
<dbReference type="InterPro" id="IPR001356">
    <property type="entry name" value="HD"/>
</dbReference>
<dbReference type="InterPro" id="IPR020479">
    <property type="entry name" value="HD_metazoa"/>
</dbReference>
<dbReference type="InterPro" id="IPR017970">
    <property type="entry name" value="Homeobox_CS"/>
</dbReference>
<dbReference type="InterPro" id="IPR009057">
    <property type="entry name" value="Homeodomain-like_sf"/>
</dbReference>
<dbReference type="PANTHER" id="PTHR45771:SF2">
    <property type="entry name" value="HOMEOBOX PROTEIN HOX-A4"/>
    <property type="match status" value="1"/>
</dbReference>
<dbReference type="PANTHER" id="PTHR45771">
    <property type="entry name" value="HOMEOTIC PROTEIN DEFORMED"/>
    <property type="match status" value="1"/>
</dbReference>
<dbReference type="Pfam" id="PF00046">
    <property type="entry name" value="Homeodomain"/>
    <property type="match status" value="1"/>
</dbReference>
<dbReference type="PRINTS" id="PR00024">
    <property type="entry name" value="HOMEOBOX"/>
</dbReference>
<dbReference type="SMART" id="SM00389">
    <property type="entry name" value="HOX"/>
    <property type="match status" value="1"/>
</dbReference>
<dbReference type="SUPFAM" id="SSF46689">
    <property type="entry name" value="Homeodomain-like"/>
    <property type="match status" value="1"/>
</dbReference>
<dbReference type="PROSITE" id="PS00027">
    <property type="entry name" value="HOMEOBOX_1"/>
    <property type="match status" value="1"/>
</dbReference>
<dbReference type="PROSITE" id="PS50071">
    <property type="entry name" value="HOMEOBOX_2"/>
    <property type="match status" value="1"/>
</dbReference>
<evidence type="ECO:0000255" key="1">
    <source>
        <dbReference type="PROSITE-ProRule" id="PRU00108"/>
    </source>
</evidence>
<evidence type="ECO:0000305" key="2"/>
<reference key="1">
    <citation type="journal article" date="1987" name="Gene">
        <title>Cloning and expression of rat homeo-box-containing sequences.</title>
        <authorList>
            <person name="Falzon M."/>
            <person name="Sanderson N."/>
            <person name="Chung S.Y."/>
        </authorList>
    </citation>
    <scope>NUCLEOTIDE SEQUENCE [GENOMIC DNA]</scope>
    <source>
        <strain>Sprague-Dawley</strain>
    </source>
</reference>
<reference key="2">
    <citation type="journal article" date="1994" name="Biochem. Genet.">
        <title>Cloning of rat homeobox genes.</title>
        <authorList>
            <person name="Sakoyama Y."/>
            <person name="Mizuta I."/>
            <person name="Ogasawara N."/>
            <person name="Yoshikawa H."/>
        </authorList>
    </citation>
    <scope>NUCLEOTIDE SEQUENCE [GENOMIC DNA] OF 1-42</scope>
</reference>
<sequence>EFHFNRYLTRRRRIEIAHTLCLSERQVKIWFQNRRMKWKKDHKLPNTRCDLPTLPRPLPARLGKHKL</sequence>
<organism>
    <name type="scientific">Rattus norvegicus</name>
    <name type="common">Rat</name>
    <dbReference type="NCBI Taxonomy" id="10116"/>
    <lineage>
        <taxon>Eukaryota</taxon>
        <taxon>Metazoa</taxon>
        <taxon>Chordata</taxon>
        <taxon>Craniata</taxon>
        <taxon>Vertebrata</taxon>
        <taxon>Euteleostomi</taxon>
        <taxon>Mammalia</taxon>
        <taxon>Eutheria</taxon>
        <taxon>Euarchontoglires</taxon>
        <taxon>Glires</taxon>
        <taxon>Rodentia</taxon>
        <taxon>Myomorpha</taxon>
        <taxon>Muroidea</taxon>
        <taxon>Muridae</taxon>
        <taxon>Murinae</taxon>
        <taxon>Rattus</taxon>
    </lineage>
</organism>
<proteinExistence type="inferred from homology"/>
<keyword id="KW-0217">Developmental protein</keyword>
<keyword id="KW-0238">DNA-binding</keyword>
<keyword id="KW-0371">Homeobox</keyword>
<keyword id="KW-0539">Nucleus</keyword>
<keyword id="KW-1185">Reference proteome</keyword>
<keyword id="KW-0804">Transcription</keyword>
<keyword id="KW-0805">Transcription regulation</keyword>
<comment type="function">
    <text>Sequence-specific transcription factor which is part of a developmental regulatory system that provides cells with specific positional identities on the anterior-posterior axis.</text>
</comment>
<comment type="subcellular location">
    <subcellularLocation>
        <location>Nucleus</location>
    </subcellularLocation>
</comment>
<comment type="similarity">
    <text evidence="2">Belongs to the Antp homeobox family. Deformed subfamily.</text>
</comment>
<name>HXA4_RAT</name>
<protein>
    <recommendedName>
        <fullName>Homeobox protein Hox-A4</fullName>
    </recommendedName>
    <alternativeName>
        <fullName>Homeobox protein R2</fullName>
    </alternativeName>
</protein>